<keyword id="KW-1003">Cell membrane</keyword>
<keyword id="KW-0472">Membrane</keyword>
<keyword id="KW-1185">Reference proteome</keyword>
<keyword id="KW-0808">Transferase</keyword>
<keyword id="KW-0812">Transmembrane</keyword>
<keyword id="KW-1133">Transmembrane helix</keyword>
<proteinExistence type="inferred from homology"/>
<name>LGT1_STRCO</name>
<protein>
    <recommendedName>
        <fullName evidence="1">Phosphatidylglycerol--prolipoprotein diacylglyceryl transferase 1</fullName>
        <ecNumber evidence="1">2.5.1.145</ecNumber>
    </recommendedName>
</protein>
<comment type="function">
    <text evidence="1">Catalyzes the transfer of the diacylglyceryl group from phosphatidylglycerol to the sulfhydryl group of the N-terminal cysteine of a prolipoprotein, the first step in the formation of mature lipoproteins.</text>
</comment>
<comment type="catalytic activity">
    <reaction evidence="1">
        <text>L-cysteinyl-[prolipoprotein] + a 1,2-diacyl-sn-glycero-3-phospho-(1'-sn-glycerol) = an S-1,2-diacyl-sn-glyceryl-L-cysteinyl-[prolipoprotein] + sn-glycerol 1-phosphate + H(+)</text>
        <dbReference type="Rhea" id="RHEA:56712"/>
        <dbReference type="Rhea" id="RHEA-COMP:14679"/>
        <dbReference type="Rhea" id="RHEA-COMP:14680"/>
        <dbReference type="ChEBI" id="CHEBI:15378"/>
        <dbReference type="ChEBI" id="CHEBI:29950"/>
        <dbReference type="ChEBI" id="CHEBI:57685"/>
        <dbReference type="ChEBI" id="CHEBI:64716"/>
        <dbReference type="ChEBI" id="CHEBI:140658"/>
        <dbReference type="EC" id="2.5.1.145"/>
    </reaction>
</comment>
<comment type="pathway">
    <text evidence="1">Protein modification; lipoprotein biosynthesis (diacylglyceryl transfer).</text>
</comment>
<comment type="subcellular location">
    <subcellularLocation>
        <location evidence="1">Cell membrane</location>
        <topology evidence="1">Multi-pass membrane protein</topology>
    </subcellularLocation>
</comment>
<comment type="similarity">
    <text evidence="1">Belongs to the Lgt family.</text>
</comment>
<accession>Q9S2U8</accession>
<sequence length="343" mass="36803">MELAFIPSPSRGVLHLGPVPLRGYAFCIIIGVFVAVWLGNKRWVARGGRPGTVADIAVWAVPFGLIGGRLYHVITDYQLYFSEGRDWVDAFKIWEGGLGIWGAIAFGAVGAWIGARRRGVPMPAYADAVAPGIALAQAIGRWGNWFNQELYGKATDLPWAVEITSTADGRVPGTYHPTFLYESLWCIGVALLVIWADRRFKLGHGRAFALYVAAYCAGRFWIEYMRVDDAHHILGLRLNNWTALFVFLLAVLYIVLSARKRPGREAVVEPGAETAAGDSGSAADKDVKGTKDAEDAEGAEDGAEKTDASGATEAPEDTSGADEADAAKDAEGVTNGADSAKKG</sequence>
<feature type="chain" id="PRO_0000172685" description="Phosphatidylglycerol--prolipoprotein diacylglyceryl transferase 1">
    <location>
        <begin position="1"/>
        <end position="343"/>
    </location>
</feature>
<feature type="transmembrane region" description="Helical" evidence="1">
    <location>
        <begin position="19"/>
        <end position="39"/>
    </location>
</feature>
<feature type="transmembrane region" description="Helical" evidence="1">
    <location>
        <begin position="54"/>
        <end position="74"/>
    </location>
</feature>
<feature type="transmembrane region" description="Helical" evidence="1">
    <location>
        <begin position="93"/>
        <end position="113"/>
    </location>
</feature>
<feature type="transmembrane region" description="Helical" evidence="1">
    <location>
        <begin position="119"/>
        <end position="139"/>
    </location>
</feature>
<feature type="transmembrane region" description="Helical" evidence="1">
    <location>
        <begin position="176"/>
        <end position="196"/>
    </location>
</feature>
<feature type="transmembrane region" description="Helical" evidence="1">
    <location>
        <begin position="202"/>
        <end position="224"/>
    </location>
</feature>
<feature type="transmembrane region" description="Helical" evidence="1">
    <location>
        <begin position="238"/>
        <end position="258"/>
    </location>
</feature>
<feature type="region of interest" description="Disordered" evidence="2">
    <location>
        <begin position="269"/>
        <end position="343"/>
    </location>
</feature>
<feature type="compositionally biased region" description="Basic and acidic residues" evidence="2">
    <location>
        <begin position="283"/>
        <end position="293"/>
    </location>
</feature>
<feature type="compositionally biased region" description="Acidic residues" evidence="2">
    <location>
        <begin position="314"/>
        <end position="324"/>
    </location>
</feature>
<feature type="binding site" evidence="1">
    <location>
        <position position="141"/>
    </location>
    <ligand>
        <name>a 1,2-diacyl-sn-glycero-3-phospho-(1'-sn-glycerol)</name>
        <dbReference type="ChEBI" id="CHEBI:64716"/>
    </ligand>
</feature>
<reference key="1">
    <citation type="journal article" date="2002" name="Nature">
        <title>Complete genome sequence of the model actinomycete Streptomyces coelicolor A3(2).</title>
        <authorList>
            <person name="Bentley S.D."/>
            <person name="Chater K.F."/>
            <person name="Cerdeno-Tarraga A.-M."/>
            <person name="Challis G.L."/>
            <person name="Thomson N.R."/>
            <person name="James K.D."/>
            <person name="Harris D.E."/>
            <person name="Quail M.A."/>
            <person name="Kieser H."/>
            <person name="Harper D."/>
            <person name="Bateman A."/>
            <person name="Brown S."/>
            <person name="Chandra G."/>
            <person name="Chen C.W."/>
            <person name="Collins M."/>
            <person name="Cronin A."/>
            <person name="Fraser A."/>
            <person name="Goble A."/>
            <person name="Hidalgo J."/>
            <person name="Hornsby T."/>
            <person name="Howarth S."/>
            <person name="Huang C.-H."/>
            <person name="Kieser T."/>
            <person name="Larke L."/>
            <person name="Murphy L.D."/>
            <person name="Oliver K."/>
            <person name="O'Neil S."/>
            <person name="Rabbinowitsch E."/>
            <person name="Rajandream M.A."/>
            <person name="Rutherford K.M."/>
            <person name="Rutter S."/>
            <person name="Seeger K."/>
            <person name="Saunders D."/>
            <person name="Sharp S."/>
            <person name="Squares R."/>
            <person name="Squares S."/>
            <person name="Taylor K."/>
            <person name="Warren T."/>
            <person name="Wietzorrek A."/>
            <person name="Woodward J.R."/>
            <person name="Barrell B.G."/>
            <person name="Parkhill J."/>
            <person name="Hopwood D.A."/>
        </authorList>
    </citation>
    <scope>NUCLEOTIDE SEQUENCE [LARGE SCALE GENOMIC DNA]</scope>
    <source>
        <strain>ATCC BAA-471 / A3(2) / M145</strain>
    </source>
</reference>
<evidence type="ECO:0000255" key="1">
    <source>
        <dbReference type="HAMAP-Rule" id="MF_01147"/>
    </source>
</evidence>
<evidence type="ECO:0000256" key="2">
    <source>
        <dbReference type="SAM" id="MobiDB-lite"/>
    </source>
</evidence>
<organism>
    <name type="scientific">Streptomyces coelicolor (strain ATCC BAA-471 / A3(2) / M145)</name>
    <dbReference type="NCBI Taxonomy" id="100226"/>
    <lineage>
        <taxon>Bacteria</taxon>
        <taxon>Bacillati</taxon>
        <taxon>Actinomycetota</taxon>
        <taxon>Actinomycetes</taxon>
        <taxon>Kitasatosporales</taxon>
        <taxon>Streptomycetaceae</taxon>
        <taxon>Streptomyces</taxon>
        <taxon>Streptomyces albidoflavus group</taxon>
    </lineage>
</organism>
<gene>
    <name evidence="1" type="primary">lgt1</name>
    <name type="ordered locus">SCO2034</name>
    <name type="ORF">SC4G6.03c</name>
</gene>
<dbReference type="EC" id="2.5.1.145" evidence="1"/>
<dbReference type="EMBL" id="AL939111">
    <property type="protein sequence ID" value="CAB51426.1"/>
    <property type="molecule type" value="Genomic_DNA"/>
</dbReference>
<dbReference type="PIR" id="T35063">
    <property type="entry name" value="T35063"/>
</dbReference>
<dbReference type="RefSeq" id="NP_626294.1">
    <property type="nucleotide sequence ID" value="NC_003888.3"/>
</dbReference>
<dbReference type="SMR" id="Q9S2U8"/>
<dbReference type="FunCoup" id="Q9S2U8">
    <property type="interactions" value="15"/>
</dbReference>
<dbReference type="STRING" id="100226.gene:17759632"/>
<dbReference type="PaxDb" id="100226-SCO2034"/>
<dbReference type="KEGG" id="sco:SCO2034"/>
<dbReference type="PATRIC" id="fig|100226.15.peg.2065"/>
<dbReference type="eggNOG" id="COG0682">
    <property type="taxonomic scope" value="Bacteria"/>
</dbReference>
<dbReference type="HOGENOM" id="CLU_013386_2_2_11"/>
<dbReference type="InParanoid" id="Q9S2U8"/>
<dbReference type="OrthoDB" id="871140at2"/>
<dbReference type="PhylomeDB" id="Q9S2U8"/>
<dbReference type="UniPathway" id="UPA00664"/>
<dbReference type="Proteomes" id="UP000001973">
    <property type="component" value="Chromosome"/>
</dbReference>
<dbReference type="GO" id="GO:0005886">
    <property type="term" value="C:plasma membrane"/>
    <property type="evidence" value="ECO:0000318"/>
    <property type="project" value="GO_Central"/>
</dbReference>
<dbReference type="GO" id="GO:0008961">
    <property type="term" value="F:phosphatidylglycerol-prolipoprotein diacylglyceryl transferase activity"/>
    <property type="evidence" value="ECO:0000318"/>
    <property type="project" value="GO_Central"/>
</dbReference>
<dbReference type="GO" id="GO:0042158">
    <property type="term" value="P:lipoprotein biosynthetic process"/>
    <property type="evidence" value="ECO:0000318"/>
    <property type="project" value="GO_Central"/>
</dbReference>
<dbReference type="HAMAP" id="MF_01147">
    <property type="entry name" value="Lgt"/>
    <property type="match status" value="1"/>
</dbReference>
<dbReference type="InterPro" id="IPR001640">
    <property type="entry name" value="Lgt"/>
</dbReference>
<dbReference type="NCBIfam" id="TIGR00544">
    <property type="entry name" value="lgt"/>
    <property type="match status" value="1"/>
</dbReference>
<dbReference type="PANTHER" id="PTHR30589:SF0">
    <property type="entry name" value="PHOSPHATIDYLGLYCEROL--PROLIPOPROTEIN DIACYLGLYCERYL TRANSFERASE"/>
    <property type="match status" value="1"/>
</dbReference>
<dbReference type="PANTHER" id="PTHR30589">
    <property type="entry name" value="PROLIPOPROTEIN DIACYLGLYCERYL TRANSFERASE"/>
    <property type="match status" value="1"/>
</dbReference>
<dbReference type="Pfam" id="PF01790">
    <property type="entry name" value="LGT"/>
    <property type="match status" value="1"/>
</dbReference>
<dbReference type="PROSITE" id="PS01311">
    <property type="entry name" value="LGT"/>
    <property type="match status" value="1"/>
</dbReference>